<keyword id="KW-0025">Alternative splicing</keyword>
<keyword id="KW-0040">ANK repeat</keyword>
<keyword id="KW-1003">Cell membrane</keyword>
<keyword id="KW-0175">Coiled coil</keyword>
<keyword id="KW-0967">Endosome</keyword>
<keyword id="KW-0343">GTPase activation</keyword>
<keyword id="KW-0472">Membrane</keyword>
<keyword id="KW-0479">Metal-binding</keyword>
<keyword id="KW-0597">Phosphoprotein</keyword>
<keyword id="KW-1185">Reference proteome</keyword>
<keyword id="KW-0677">Repeat</keyword>
<keyword id="KW-0862">Zinc</keyword>
<keyword id="KW-0863">Zinc-finger</keyword>
<protein>
    <recommendedName>
        <fullName>Arf-GAP with coiled-coil, ANK repeat and PH domain-containing protein 2</fullName>
    </recommendedName>
    <alternativeName>
        <fullName>Centaurin-beta-2</fullName>
        <shortName>Cnt-b2</shortName>
    </alternativeName>
</protein>
<proteinExistence type="evidence at protein level"/>
<organism>
    <name type="scientific">Mus musculus</name>
    <name type="common">Mouse</name>
    <dbReference type="NCBI Taxonomy" id="10090"/>
    <lineage>
        <taxon>Eukaryota</taxon>
        <taxon>Metazoa</taxon>
        <taxon>Chordata</taxon>
        <taxon>Craniata</taxon>
        <taxon>Vertebrata</taxon>
        <taxon>Euteleostomi</taxon>
        <taxon>Mammalia</taxon>
        <taxon>Eutheria</taxon>
        <taxon>Euarchontoglires</taxon>
        <taxon>Glires</taxon>
        <taxon>Rodentia</taxon>
        <taxon>Myomorpha</taxon>
        <taxon>Muroidea</taxon>
        <taxon>Muridae</taxon>
        <taxon>Murinae</taxon>
        <taxon>Mus</taxon>
        <taxon>Mus</taxon>
    </lineage>
</organism>
<comment type="function">
    <text evidence="2">GTPase-activating protein (GAP) for ADP ribosylation factor 6 (ARF6). Doesn't show GAP activity for RAB35.</text>
</comment>
<comment type="activity regulation">
    <text evidence="2">GAP activity stimulated by phosphatidylinositol 4,5-bisphosphate (PIP2) and phosphatidic acid.</text>
</comment>
<comment type="subunit">
    <text evidence="9">Interacts with RAB35 (GTP-bound form); the interaction is direct and probably recruits ACAP2 to membranes. Interacts with MICALL1; the interaction is indirect through RAB35.</text>
</comment>
<comment type="subcellular location">
    <subcellularLocation>
        <location evidence="1">Endosome membrane</location>
        <topology evidence="1">Peripheral membrane protein</topology>
    </subcellularLocation>
    <subcellularLocation>
        <location evidence="2">Cell membrane</location>
    </subcellularLocation>
</comment>
<comment type="alternative products">
    <event type="alternative splicing"/>
    <isoform>
        <id>Q6ZQK5-1</id>
        <name evidence="7">1</name>
        <sequence type="displayed"/>
    </isoform>
    <isoform>
        <id>Q6ZQK5-2</id>
        <name evidence="8">2</name>
        <sequence type="described" ref="VSP_052554"/>
    </isoform>
</comment>
<comment type="domain">
    <text evidence="2">The ANK domains are required for interaction with RAB35.</text>
</comment>
<comment type="sequence caution" evidence="11">
    <conflict type="erroneous initiation">
        <sequence resource="EMBL-CDS" id="BAC97851"/>
    </conflict>
</comment>
<gene>
    <name type="primary">Acap2</name>
    <name type="synonym">Centb2</name>
    <name evidence="14" type="synonym">Kiaa0041</name>
</gene>
<dbReference type="EMBL" id="AK129041">
    <property type="protein sequence ID" value="BAC97851.1"/>
    <property type="status" value="ALT_INIT"/>
    <property type="molecule type" value="mRNA"/>
</dbReference>
<dbReference type="EMBL" id="AK020591">
    <property type="protein sequence ID" value="BAB32141.3"/>
    <property type="molecule type" value="mRNA"/>
</dbReference>
<dbReference type="EMBL" id="AK147319">
    <property type="protein sequence ID" value="BAE27843.1"/>
    <property type="molecule type" value="mRNA"/>
</dbReference>
<dbReference type="EMBL" id="BC046455">
    <property type="protein sequence ID" value="AAH46455.1"/>
    <property type="molecule type" value="mRNA"/>
</dbReference>
<dbReference type="CCDS" id="CCDS49823.1">
    <molecule id="Q6ZQK5-1"/>
</dbReference>
<dbReference type="RefSeq" id="NP_084414.1">
    <molecule id="Q6ZQK5-1"/>
    <property type="nucleotide sequence ID" value="NM_030138.2"/>
</dbReference>
<dbReference type="SMR" id="Q6ZQK5"/>
<dbReference type="BioGRID" id="219526">
    <property type="interactions" value="2"/>
</dbReference>
<dbReference type="FunCoup" id="Q6ZQK5">
    <property type="interactions" value="2958"/>
</dbReference>
<dbReference type="STRING" id="10090.ENSMUSP00000154983"/>
<dbReference type="GlyGen" id="Q6ZQK5">
    <property type="glycosylation" value="3 sites, 2 N-linked glycans (2 sites), 1 O-linked glycan (1 site)"/>
</dbReference>
<dbReference type="iPTMnet" id="Q6ZQK5"/>
<dbReference type="PhosphoSitePlus" id="Q6ZQK5"/>
<dbReference type="jPOST" id="Q6ZQK5"/>
<dbReference type="PaxDb" id="10090-ENSMUSP00000061501"/>
<dbReference type="PeptideAtlas" id="Q6ZQK5"/>
<dbReference type="ProteomicsDB" id="285834">
    <molecule id="Q6ZQK5-1"/>
</dbReference>
<dbReference type="ProteomicsDB" id="285835">
    <molecule id="Q6ZQK5-2"/>
</dbReference>
<dbReference type="Pumba" id="Q6ZQK5"/>
<dbReference type="Antibodypedia" id="19460">
    <property type="antibodies" value="214 antibodies from 35 providers"/>
</dbReference>
<dbReference type="DNASU" id="78618"/>
<dbReference type="Ensembl" id="ENSMUST00000058033.9">
    <molecule id="Q6ZQK5-2"/>
    <property type="protein sequence ID" value="ENSMUSP00000061501.9"/>
    <property type="gene ID" value="ENSMUSG00000049076.13"/>
</dbReference>
<dbReference type="Ensembl" id="ENSMUST00000230614.2">
    <molecule id="Q6ZQK5-1"/>
    <property type="protein sequence ID" value="ENSMUSP00000154983.2"/>
    <property type="gene ID" value="ENSMUSG00000049076.13"/>
</dbReference>
<dbReference type="GeneID" id="78618"/>
<dbReference type="KEGG" id="mmu:78618"/>
<dbReference type="UCSC" id="uc007yxb.1">
    <molecule id="Q6ZQK5-1"/>
    <property type="organism name" value="mouse"/>
</dbReference>
<dbReference type="UCSC" id="uc007yxc.1">
    <molecule id="Q6ZQK5-2"/>
    <property type="organism name" value="mouse"/>
</dbReference>
<dbReference type="AGR" id="MGI:1925868"/>
<dbReference type="CTD" id="23527"/>
<dbReference type="MGI" id="MGI:1925868">
    <property type="gene designation" value="Acap2"/>
</dbReference>
<dbReference type="VEuPathDB" id="HostDB:ENSMUSG00000049076"/>
<dbReference type="eggNOG" id="KOG0521">
    <property type="taxonomic scope" value="Eukaryota"/>
</dbReference>
<dbReference type="GeneTree" id="ENSGT00940000156389"/>
<dbReference type="HOGENOM" id="CLU_012513_0_1_1"/>
<dbReference type="InParanoid" id="Q6ZQK5"/>
<dbReference type="OMA" id="FGFREAM"/>
<dbReference type="OrthoDB" id="10070851at2759"/>
<dbReference type="PhylomeDB" id="Q6ZQK5"/>
<dbReference type="TreeFam" id="TF318315"/>
<dbReference type="BioGRID-ORCS" id="78618">
    <property type="hits" value="3 hits in 79 CRISPR screens"/>
</dbReference>
<dbReference type="CD-CODE" id="CE726F99">
    <property type="entry name" value="Postsynaptic density"/>
</dbReference>
<dbReference type="ChiTaRS" id="Acap2">
    <property type="organism name" value="mouse"/>
</dbReference>
<dbReference type="PRO" id="PR:Q6ZQK5"/>
<dbReference type="Proteomes" id="UP000000589">
    <property type="component" value="Chromosome 16"/>
</dbReference>
<dbReference type="RNAct" id="Q6ZQK5">
    <property type="molecule type" value="protein"/>
</dbReference>
<dbReference type="Bgee" id="ENSMUSG00000049076">
    <property type="expression patterns" value="Expressed in stroma of bone marrow and 228 other cell types or tissues"/>
</dbReference>
<dbReference type="ExpressionAtlas" id="Q6ZQK5">
    <property type="expression patterns" value="baseline and differential"/>
</dbReference>
<dbReference type="GO" id="GO:0010008">
    <property type="term" value="C:endosome membrane"/>
    <property type="evidence" value="ECO:0000250"/>
    <property type="project" value="UniProtKB"/>
</dbReference>
<dbReference type="GO" id="GO:0005886">
    <property type="term" value="C:plasma membrane"/>
    <property type="evidence" value="ECO:0000250"/>
    <property type="project" value="UniProtKB"/>
</dbReference>
<dbReference type="GO" id="GO:0001726">
    <property type="term" value="C:ruffle"/>
    <property type="evidence" value="ECO:0000266"/>
    <property type="project" value="MGI"/>
</dbReference>
<dbReference type="GO" id="GO:0005096">
    <property type="term" value="F:GTPase activator activity"/>
    <property type="evidence" value="ECO:0000266"/>
    <property type="project" value="MGI"/>
</dbReference>
<dbReference type="GO" id="GO:0080025">
    <property type="term" value="F:phosphatidylinositol-3,5-bisphosphate binding"/>
    <property type="evidence" value="ECO:0000314"/>
    <property type="project" value="MGI"/>
</dbReference>
<dbReference type="GO" id="GO:0031267">
    <property type="term" value="F:small GTPase binding"/>
    <property type="evidence" value="ECO:0000353"/>
    <property type="project" value="UniProtKB"/>
</dbReference>
<dbReference type="GO" id="GO:0008270">
    <property type="term" value="F:zinc ion binding"/>
    <property type="evidence" value="ECO:0007669"/>
    <property type="project" value="UniProtKB-KW"/>
</dbReference>
<dbReference type="GO" id="GO:0030029">
    <property type="term" value="P:actin filament-based process"/>
    <property type="evidence" value="ECO:0000266"/>
    <property type="project" value="MGI"/>
</dbReference>
<dbReference type="GO" id="GO:1990090">
    <property type="term" value="P:cellular response to nerve growth factor stimulus"/>
    <property type="evidence" value="ECO:0000250"/>
    <property type="project" value="UniProtKB"/>
</dbReference>
<dbReference type="GO" id="GO:0032456">
    <property type="term" value="P:endocytic recycling"/>
    <property type="evidence" value="ECO:0000250"/>
    <property type="project" value="UniProtKB"/>
</dbReference>
<dbReference type="CDD" id="cd08851">
    <property type="entry name" value="ArfGap_ACAP2"/>
    <property type="match status" value="1"/>
</dbReference>
<dbReference type="CDD" id="cd07638">
    <property type="entry name" value="BAR_ACAP2"/>
    <property type="match status" value="1"/>
</dbReference>
<dbReference type="CDD" id="cd13250">
    <property type="entry name" value="PH_ACAP"/>
    <property type="match status" value="1"/>
</dbReference>
<dbReference type="FunFam" id="1.10.220.150:FF:000007">
    <property type="entry name" value="Arf-GAP with coiled-coil, ANK repeat and PH domain-containing protein 2"/>
    <property type="match status" value="1"/>
</dbReference>
<dbReference type="FunFam" id="1.25.40.20:FF:000020">
    <property type="entry name" value="Arf-GAP with coiled-coil, ANK repeat and PH domain-containing protein 2"/>
    <property type="match status" value="1"/>
</dbReference>
<dbReference type="FunFam" id="2.30.29.30:FF:000026">
    <property type="entry name" value="Arf-GAP with coiled-coil, ANK repeat and PH domain-containing protein 2"/>
    <property type="match status" value="1"/>
</dbReference>
<dbReference type="FunFam" id="1.20.1270.60:FF:000025">
    <property type="entry name" value="arf-GAP with coiled-coil, ANK repeat and PH domain-containing protein 2"/>
    <property type="match status" value="1"/>
</dbReference>
<dbReference type="Gene3D" id="1.25.40.20">
    <property type="entry name" value="Ankyrin repeat-containing domain"/>
    <property type="match status" value="1"/>
</dbReference>
<dbReference type="Gene3D" id="1.10.220.150">
    <property type="entry name" value="Arf GTPase activating protein"/>
    <property type="match status" value="1"/>
</dbReference>
<dbReference type="Gene3D" id="1.20.1270.60">
    <property type="entry name" value="Arfaptin homology (AH) domain/BAR domain"/>
    <property type="match status" value="1"/>
</dbReference>
<dbReference type="Gene3D" id="2.30.29.30">
    <property type="entry name" value="Pleckstrin-homology domain (PH domain)/Phosphotyrosine-binding domain (PTB)"/>
    <property type="match status" value="1"/>
</dbReference>
<dbReference type="InterPro" id="IPR045258">
    <property type="entry name" value="ACAP1/2/3-like"/>
</dbReference>
<dbReference type="InterPro" id="IPR027267">
    <property type="entry name" value="AH/BAR_dom_sf"/>
</dbReference>
<dbReference type="InterPro" id="IPR002110">
    <property type="entry name" value="Ankyrin_rpt"/>
</dbReference>
<dbReference type="InterPro" id="IPR036770">
    <property type="entry name" value="Ankyrin_rpt-contain_sf"/>
</dbReference>
<dbReference type="InterPro" id="IPR037278">
    <property type="entry name" value="ARFGAP/RecO"/>
</dbReference>
<dbReference type="InterPro" id="IPR001164">
    <property type="entry name" value="ArfGAP_dom"/>
</dbReference>
<dbReference type="InterPro" id="IPR038508">
    <property type="entry name" value="ArfGAP_dom_sf"/>
</dbReference>
<dbReference type="InterPro" id="IPR004148">
    <property type="entry name" value="BAR_dom"/>
</dbReference>
<dbReference type="InterPro" id="IPR011993">
    <property type="entry name" value="PH-like_dom_sf"/>
</dbReference>
<dbReference type="InterPro" id="IPR001849">
    <property type="entry name" value="PH_domain"/>
</dbReference>
<dbReference type="PANTHER" id="PTHR23180:SF241">
    <property type="entry name" value="ARF-GAP WITH COILED-COIL, ANK REPEAT AND PH DOMAIN-CONTAINING PROTEIN 2"/>
    <property type="match status" value="1"/>
</dbReference>
<dbReference type="PANTHER" id="PTHR23180">
    <property type="entry name" value="CENTAURIN/ARF"/>
    <property type="match status" value="1"/>
</dbReference>
<dbReference type="Pfam" id="PF12796">
    <property type="entry name" value="Ank_2"/>
    <property type="match status" value="1"/>
</dbReference>
<dbReference type="Pfam" id="PF01412">
    <property type="entry name" value="ArfGap"/>
    <property type="match status" value="1"/>
</dbReference>
<dbReference type="Pfam" id="PF16746">
    <property type="entry name" value="BAR_3"/>
    <property type="match status" value="1"/>
</dbReference>
<dbReference type="Pfam" id="PF00169">
    <property type="entry name" value="PH"/>
    <property type="match status" value="1"/>
</dbReference>
<dbReference type="PRINTS" id="PR00405">
    <property type="entry name" value="REVINTRACTNG"/>
</dbReference>
<dbReference type="SMART" id="SM00248">
    <property type="entry name" value="ANK"/>
    <property type="match status" value="3"/>
</dbReference>
<dbReference type="SMART" id="SM00105">
    <property type="entry name" value="ArfGap"/>
    <property type="match status" value="1"/>
</dbReference>
<dbReference type="SMART" id="SM00233">
    <property type="entry name" value="PH"/>
    <property type="match status" value="1"/>
</dbReference>
<dbReference type="SUPFAM" id="SSF48403">
    <property type="entry name" value="Ankyrin repeat"/>
    <property type="match status" value="1"/>
</dbReference>
<dbReference type="SUPFAM" id="SSF57863">
    <property type="entry name" value="ArfGap/RecO-like zinc finger"/>
    <property type="match status" value="1"/>
</dbReference>
<dbReference type="SUPFAM" id="SSF103657">
    <property type="entry name" value="BAR/IMD domain-like"/>
    <property type="match status" value="1"/>
</dbReference>
<dbReference type="SUPFAM" id="SSF50729">
    <property type="entry name" value="PH domain-like"/>
    <property type="match status" value="1"/>
</dbReference>
<dbReference type="PROSITE" id="PS50297">
    <property type="entry name" value="ANK_REP_REGION"/>
    <property type="match status" value="1"/>
</dbReference>
<dbReference type="PROSITE" id="PS50088">
    <property type="entry name" value="ANK_REPEAT"/>
    <property type="match status" value="2"/>
</dbReference>
<dbReference type="PROSITE" id="PS50115">
    <property type="entry name" value="ARFGAP"/>
    <property type="match status" value="1"/>
</dbReference>
<dbReference type="PROSITE" id="PS50003">
    <property type="entry name" value="PH_DOMAIN"/>
    <property type="match status" value="1"/>
</dbReference>
<feature type="chain" id="PRO_0000306385" description="Arf-GAP with coiled-coil, ANK repeat and PH domain-containing protein 2">
    <location>
        <begin position="1"/>
        <end position="770"/>
    </location>
</feature>
<feature type="domain" description="BAR" evidence="3">
    <location>
        <begin position="1"/>
        <end position="226"/>
    </location>
</feature>
<feature type="domain" description="PH" evidence="4">
    <location>
        <begin position="266"/>
        <end position="361"/>
    </location>
</feature>
<feature type="domain" description="Arf-GAP" evidence="5">
    <location>
        <begin position="399"/>
        <end position="520"/>
    </location>
</feature>
<feature type="repeat" description="ANK 1" evidence="3">
    <location>
        <begin position="632"/>
        <end position="661"/>
    </location>
</feature>
<feature type="repeat" description="ANK 2" evidence="3">
    <location>
        <begin position="665"/>
        <end position="694"/>
    </location>
</feature>
<feature type="repeat" description="ANK 3" evidence="3">
    <location>
        <begin position="698"/>
        <end position="727"/>
    </location>
</feature>
<feature type="zinc finger region" description="C4-type" evidence="5">
    <location>
        <begin position="414"/>
        <end position="437"/>
    </location>
</feature>
<feature type="region of interest" description="Disordered" evidence="6">
    <location>
        <begin position="371"/>
        <end position="391"/>
    </location>
</feature>
<feature type="region of interest" description="Disordered" evidence="6">
    <location>
        <begin position="542"/>
        <end position="572"/>
    </location>
</feature>
<feature type="compositionally biased region" description="Polar residues" evidence="6">
    <location>
        <begin position="379"/>
        <end position="388"/>
    </location>
</feature>
<feature type="compositionally biased region" description="Polar residues" evidence="6">
    <location>
        <begin position="550"/>
        <end position="561"/>
    </location>
</feature>
<feature type="modified residue" description="Phosphoserine" evidence="17 18">
    <location>
        <position position="384"/>
    </location>
</feature>
<feature type="modified residue" description="Phosphoserine" evidence="18">
    <location>
        <position position="387"/>
    </location>
</feature>
<feature type="modified residue" description="Phosphoserine" evidence="2">
    <location>
        <position position="521"/>
    </location>
</feature>
<feature type="modified residue" description="Phosphoserine" evidence="18">
    <location>
        <position position="573"/>
    </location>
</feature>
<feature type="modified residue" description="Phosphoserine" evidence="18">
    <location>
        <position position="576"/>
    </location>
</feature>
<feature type="modified residue" description="Phosphotyrosine" evidence="16">
    <location>
        <position position="734"/>
    </location>
</feature>
<feature type="modified residue" description="Phosphoserine" evidence="2">
    <location>
        <position position="767"/>
    </location>
</feature>
<feature type="splice variant" id="VSP_052554" description="In isoform 2." evidence="10">
    <location>
        <begin position="78"/>
        <end position="95"/>
    </location>
</feature>
<feature type="sequence conflict" description="In Ref. 3; AAH46455." evidence="11" ref="3">
    <original>E</original>
    <variation>K</variation>
    <location>
        <position position="526"/>
    </location>
</feature>
<reference evidence="11 14" key="1">
    <citation type="journal article" date="2003" name="DNA Res.">
        <title>Prediction of the coding sequences of mouse homologues of KIAA gene: III. The complete nucleotide sequences of 500 mouse KIAA-homologous cDNAs identified by screening of terminal sequences of cDNA clones randomly sampled from size-fractionated libraries.</title>
        <authorList>
            <person name="Okazaki N."/>
            <person name="Kikuno R."/>
            <person name="Ohara R."/>
            <person name="Inamoto S."/>
            <person name="Koseki H."/>
            <person name="Hiraoka S."/>
            <person name="Saga Y."/>
            <person name="Nagase T."/>
            <person name="Ohara O."/>
            <person name="Koga H."/>
        </authorList>
    </citation>
    <scope>NUCLEOTIDE SEQUENCE [LARGE SCALE MRNA] (ISOFORM 1)</scope>
    <source>
        <tissue evidence="14">Brain</tissue>
    </source>
</reference>
<reference evidence="11 15" key="2">
    <citation type="journal article" date="2005" name="Science">
        <title>The transcriptional landscape of the mammalian genome.</title>
        <authorList>
            <person name="Carninci P."/>
            <person name="Kasukawa T."/>
            <person name="Katayama S."/>
            <person name="Gough J."/>
            <person name="Frith M.C."/>
            <person name="Maeda N."/>
            <person name="Oyama R."/>
            <person name="Ravasi T."/>
            <person name="Lenhard B."/>
            <person name="Wells C."/>
            <person name="Kodzius R."/>
            <person name="Shimokawa K."/>
            <person name="Bajic V.B."/>
            <person name="Brenner S.E."/>
            <person name="Batalov S."/>
            <person name="Forrest A.R."/>
            <person name="Zavolan M."/>
            <person name="Davis M.J."/>
            <person name="Wilming L.G."/>
            <person name="Aidinis V."/>
            <person name="Allen J.E."/>
            <person name="Ambesi-Impiombato A."/>
            <person name="Apweiler R."/>
            <person name="Aturaliya R.N."/>
            <person name="Bailey T.L."/>
            <person name="Bansal M."/>
            <person name="Baxter L."/>
            <person name="Beisel K.W."/>
            <person name="Bersano T."/>
            <person name="Bono H."/>
            <person name="Chalk A.M."/>
            <person name="Chiu K.P."/>
            <person name="Choudhary V."/>
            <person name="Christoffels A."/>
            <person name="Clutterbuck D.R."/>
            <person name="Crowe M.L."/>
            <person name="Dalla E."/>
            <person name="Dalrymple B.P."/>
            <person name="de Bono B."/>
            <person name="Della Gatta G."/>
            <person name="di Bernardo D."/>
            <person name="Down T."/>
            <person name="Engstrom P."/>
            <person name="Fagiolini M."/>
            <person name="Faulkner G."/>
            <person name="Fletcher C.F."/>
            <person name="Fukushima T."/>
            <person name="Furuno M."/>
            <person name="Futaki S."/>
            <person name="Gariboldi M."/>
            <person name="Georgii-Hemming P."/>
            <person name="Gingeras T.R."/>
            <person name="Gojobori T."/>
            <person name="Green R.E."/>
            <person name="Gustincich S."/>
            <person name="Harbers M."/>
            <person name="Hayashi Y."/>
            <person name="Hensch T.K."/>
            <person name="Hirokawa N."/>
            <person name="Hill D."/>
            <person name="Huminiecki L."/>
            <person name="Iacono M."/>
            <person name="Ikeo K."/>
            <person name="Iwama A."/>
            <person name="Ishikawa T."/>
            <person name="Jakt M."/>
            <person name="Kanapin A."/>
            <person name="Katoh M."/>
            <person name="Kawasawa Y."/>
            <person name="Kelso J."/>
            <person name="Kitamura H."/>
            <person name="Kitano H."/>
            <person name="Kollias G."/>
            <person name="Krishnan S.P."/>
            <person name="Kruger A."/>
            <person name="Kummerfeld S.K."/>
            <person name="Kurochkin I.V."/>
            <person name="Lareau L.F."/>
            <person name="Lazarevic D."/>
            <person name="Lipovich L."/>
            <person name="Liu J."/>
            <person name="Liuni S."/>
            <person name="McWilliam S."/>
            <person name="Madan Babu M."/>
            <person name="Madera M."/>
            <person name="Marchionni L."/>
            <person name="Matsuda H."/>
            <person name="Matsuzawa S."/>
            <person name="Miki H."/>
            <person name="Mignone F."/>
            <person name="Miyake S."/>
            <person name="Morris K."/>
            <person name="Mottagui-Tabar S."/>
            <person name="Mulder N."/>
            <person name="Nakano N."/>
            <person name="Nakauchi H."/>
            <person name="Ng P."/>
            <person name="Nilsson R."/>
            <person name="Nishiguchi S."/>
            <person name="Nishikawa S."/>
            <person name="Nori F."/>
            <person name="Ohara O."/>
            <person name="Okazaki Y."/>
            <person name="Orlando V."/>
            <person name="Pang K.C."/>
            <person name="Pavan W.J."/>
            <person name="Pavesi G."/>
            <person name="Pesole G."/>
            <person name="Petrovsky N."/>
            <person name="Piazza S."/>
            <person name="Reed J."/>
            <person name="Reid J.F."/>
            <person name="Ring B.Z."/>
            <person name="Ringwald M."/>
            <person name="Rost B."/>
            <person name="Ruan Y."/>
            <person name="Salzberg S.L."/>
            <person name="Sandelin A."/>
            <person name="Schneider C."/>
            <person name="Schoenbach C."/>
            <person name="Sekiguchi K."/>
            <person name="Semple C.A."/>
            <person name="Seno S."/>
            <person name="Sessa L."/>
            <person name="Sheng Y."/>
            <person name="Shibata Y."/>
            <person name="Shimada H."/>
            <person name="Shimada K."/>
            <person name="Silva D."/>
            <person name="Sinclair B."/>
            <person name="Sperling S."/>
            <person name="Stupka E."/>
            <person name="Sugiura K."/>
            <person name="Sultana R."/>
            <person name="Takenaka Y."/>
            <person name="Taki K."/>
            <person name="Tammoja K."/>
            <person name="Tan S.L."/>
            <person name="Tang S."/>
            <person name="Taylor M.S."/>
            <person name="Tegner J."/>
            <person name="Teichmann S.A."/>
            <person name="Ueda H.R."/>
            <person name="van Nimwegen E."/>
            <person name="Verardo R."/>
            <person name="Wei C.L."/>
            <person name="Yagi K."/>
            <person name="Yamanishi H."/>
            <person name="Zabarovsky E."/>
            <person name="Zhu S."/>
            <person name="Zimmer A."/>
            <person name="Hide W."/>
            <person name="Bult C."/>
            <person name="Grimmond S.M."/>
            <person name="Teasdale R.D."/>
            <person name="Liu E.T."/>
            <person name="Brusic V."/>
            <person name="Quackenbush J."/>
            <person name="Wahlestedt C."/>
            <person name="Mattick J.S."/>
            <person name="Hume D.A."/>
            <person name="Kai C."/>
            <person name="Sasaki D."/>
            <person name="Tomaru Y."/>
            <person name="Fukuda S."/>
            <person name="Kanamori-Katayama M."/>
            <person name="Suzuki M."/>
            <person name="Aoki J."/>
            <person name="Arakawa T."/>
            <person name="Iida J."/>
            <person name="Imamura K."/>
            <person name="Itoh M."/>
            <person name="Kato T."/>
            <person name="Kawaji H."/>
            <person name="Kawagashira N."/>
            <person name="Kawashima T."/>
            <person name="Kojima M."/>
            <person name="Kondo S."/>
            <person name="Konno H."/>
            <person name="Nakano K."/>
            <person name="Ninomiya N."/>
            <person name="Nishio T."/>
            <person name="Okada M."/>
            <person name="Plessy C."/>
            <person name="Shibata K."/>
            <person name="Shiraki T."/>
            <person name="Suzuki S."/>
            <person name="Tagami M."/>
            <person name="Waki K."/>
            <person name="Watahiki A."/>
            <person name="Okamura-Oho Y."/>
            <person name="Suzuki H."/>
            <person name="Kawai J."/>
            <person name="Hayashizaki Y."/>
        </authorList>
    </citation>
    <scope>NUCLEOTIDE SEQUENCE [LARGE SCALE MRNA] (ISOFORMS 1 AND 2)</scope>
    <source>
        <strain evidence="15">C57BL/6J</strain>
        <tissue evidence="13">Urinary bladder</tissue>
    </source>
</reference>
<reference evidence="11 12" key="3">
    <citation type="journal article" date="2004" name="Genome Res.">
        <title>The status, quality, and expansion of the NIH full-length cDNA project: the Mammalian Gene Collection (MGC).</title>
        <authorList>
            <consortium name="The MGC Project Team"/>
        </authorList>
    </citation>
    <scope>NUCLEOTIDE SEQUENCE [LARGE SCALE MRNA] OF 405-770</scope>
    <source>
        <strain evidence="12">Czech II</strain>
        <tissue evidence="12">Mammary gland</tissue>
    </source>
</reference>
<reference key="4">
    <citation type="journal article" date="2005" name="Nat. Biotechnol.">
        <title>Immunoaffinity profiling of tyrosine phosphorylation in cancer cells.</title>
        <authorList>
            <person name="Rush J."/>
            <person name="Moritz A."/>
            <person name="Lee K.A."/>
            <person name="Guo A."/>
            <person name="Goss V.L."/>
            <person name="Spek E.J."/>
            <person name="Zhang H."/>
            <person name="Zha X.-M."/>
            <person name="Polakiewicz R.D."/>
            <person name="Comb M.J."/>
        </authorList>
    </citation>
    <scope>PHOSPHORYLATION [LARGE SCALE ANALYSIS] AT TYR-734</scope>
    <scope>IDENTIFICATION BY MASS SPECTROMETRY [LARGE SCALE ANALYSIS]</scope>
</reference>
<reference key="5">
    <citation type="journal article" date="2007" name="Proc. Natl. Acad. Sci. U.S.A.">
        <title>Large-scale phosphorylation analysis of mouse liver.</title>
        <authorList>
            <person name="Villen J."/>
            <person name="Beausoleil S.A."/>
            <person name="Gerber S.A."/>
            <person name="Gygi S.P."/>
        </authorList>
    </citation>
    <scope>PHOSPHORYLATION [LARGE SCALE ANALYSIS] AT SER-384</scope>
    <scope>IDENTIFICATION BY MASS SPECTROMETRY [LARGE SCALE ANALYSIS]</scope>
    <source>
        <tissue>Liver</tissue>
    </source>
</reference>
<reference key="6">
    <citation type="journal article" date="2010" name="Cell">
        <title>A tissue-specific atlas of mouse protein phosphorylation and expression.</title>
        <authorList>
            <person name="Huttlin E.L."/>
            <person name="Jedrychowski M.P."/>
            <person name="Elias J.E."/>
            <person name="Goswami T."/>
            <person name="Rad R."/>
            <person name="Beausoleil S.A."/>
            <person name="Villen J."/>
            <person name="Haas W."/>
            <person name="Sowa M.E."/>
            <person name="Gygi S.P."/>
        </authorList>
    </citation>
    <scope>PHOSPHORYLATION [LARGE SCALE ANALYSIS] AT SER-384; SER-387; SER-573 AND SER-576</scope>
    <scope>IDENTIFICATION BY MASS SPECTROMETRY [LARGE SCALE ANALYSIS]</scope>
    <source>
        <tissue>Brain</tissue>
        <tissue>Brown adipose tissue</tissue>
        <tissue>Heart</tissue>
        <tissue>Kidney</tissue>
        <tissue>Liver</tissue>
        <tissue>Lung</tissue>
        <tissue>Pancreas</tissue>
        <tissue>Spleen</tissue>
        <tissue>Testis</tissue>
    </source>
</reference>
<reference key="7">
    <citation type="journal article" date="2013" name="J. Cell Sci.">
        <title>Rab35 establishes the EHD1-association site by coordinating two distinct effectors during neurite outgrowth.</title>
        <authorList>
            <person name="Kobayashi H."/>
            <person name="Fukuda M."/>
        </authorList>
    </citation>
    <scope>INTERACTION WITH RAB35 AND MICALL1</scope>
</reference>
<evidence type="ECO:0000250" key="1"/>
<evidence type="ECO:0000250" key="2">
    <source>
        <dbReference type="UniProtKB" id="Q15057"/>
    </source>
</evidence>
<evidence type="ECO:0000255" key="3"/>
<evidence type="ECO:0000255" key="4">
    <source>
        <dbReference type="PROSITE-ProRule" id="PRU00145"/>
    </source>
</evidence>
<evidence type="ECO:0000255" key="5">
    <source>
        <dbReference type="PROSITE-ProRule" id="PRU00288"/>
    </source>
</evidence>
<evidence type="ECO:0000256" key="6">
    <source>
        <dbReference type="SAM" id="MobiDB-lite"/>
    </source>
</evidence>
<evidence type="ECO:0000269" key="7">
    <source>
    </source>
</evidence>
<evidence type="ECO:0000269" key="8">
    <source>
    </source>
</evidence>
<evidence type="ECO:0000269" key="9">
    <source>
    </source>
</evidence>
<evidence type="ECO:0000303" key="10">
    <source>
    </source>
</evidence>
<evidence type="ECO:0000305" key="11"/>
<evidence type="ECO:0000312" key="12">
    <source>
        <dbReference type="EMBL" id="AAH46455.1"/>
    </source>
</evidence>
<evidence type="ECO:0000312" key="13">
    <source>
        <dbReference type="EMBL" id="BAB32141.3"/>
    </source>
</evidence>
<evidence type="ECO:0000312" key="14">
    <source>
        <dbReference type="EMBL" id="BAC97851.1"/>
    </source>
</evidence>
<evidence type="ECO:0000312" key="15">
    <source>
        <dbReference type="EMBL" id="BAE27843.1"/>
    </source>
</evidence>
<evidence type="ECO:0007744" key="16">
    <source>
    </source>
</evidence>
<evidence type="ECO:0007744" key="17">
    <source>
    </source>
</evidence>
<evidence type="ECO:0007744" key="18">
    <source>
    </source>
</evidence>
<sequence>MKMTVDFEECLKDSPRFRAALEEVEGDVAELELKLDKLVKLCIAMIDTGKAFCVANKQFMNGIRDLAQYSSNDAVVETSLTKFSDSLQEMINFHTILFDQTQRSIKAQLQNFVKEDLRKFKDAKKQFEKVSEEKENALVKNAQVQRNKQHEVEEAANILTATRKCFRHIALDYVLQINVLQSKRRSEILKSMLSFMYAHLAFFHQGYDLFSELGPYMKDLGAQLDRLVVDAAKEKREMEQKHSTIQQKDFSSDDSKLEYNVDAANGIVMEGYLFKRASNAFKTWNRRWFSIQNNQLVYQKKFKDSPTVVVEDLRLCTVKHCEDIERRFCFEVVSPTKSCMLQADSEKLRQAWIKAVQTSIATAYREKGDESEKLDKKSSPSTGSLDSGNESKEKLLKGESALQRVQCIPGNTSCCDCGLADPRWASINLGITLCIECSGIHRSLGVHFSKVRSLTLDTWEPELLKLMCELGNDVINRVYEAKLEKMGVKKPQPGQRQEKEAYIRAKYVERKFVDKYSALLSPSEQEKRIISKSCEDQRLSHARASVHTPVKSNDSGIQQCSEDGRESLPSTVSANSLYEPEGERQESSVFLDSKHLNPGLQLYRASYEKNLPKMAEALAHGADVNWANSDENQATPLIQAVLGGSLVTCEFLLQNGANVNQRDVQGRGPLHHATVLGHTGQVCLFLKRGANQHATDEEGKDPLSIAVEAANADIVTLLRLARMNEEMRESEGLYGQPGDETYQDIFRDFSQMASNNPEKLNRFQQDSQKF</sequence>
<name>ACAP2_MOUSE</name>
<accession>Q6ZQK5</accession>
<accession>Q3UHL4</accession>
<accession>Q811F3</accession>
<accession>Q9CTS8</accession>